<proteinExistence type="inferred from homology"/>
<dbReference type="EC" id="2.4.2.-" evidence="1"/>
<dbReference type="EC" id="2.4.2.22" evidence="1"/>
<dbReference type="EMBL" id="CP000247">
    <property type="protein sequence ID" value="ABG68303.1"/>
    <property type="molecule type" value="Genomic_DNA"/>
</dbReference>
<dbReference type="RefSeq" id="WP_001291991.1">
    <property type="nucleotide sequence ID" value="NC_008253.1"/>
</dbReference>
<dbReference type="SMR" id="Q0TL78"/>
<dbReference type="GeneID" id="86945191"/>
<dbReference type="KEGG" id="ecp:ECP_0267"/>
<dbReference type="HOGENOM" id="CLU_080904_3_0_6"/>
<dbReference type="UniPathway" id="UPA00602">
    <property type="reaction ID" value="UER00658"/>
</dbReference>
<dbReference type="UniPathway" id="UPA00909">
    <property type="reaction ID" value="UER00887"/>
</dbReference>
<dbReference type="Proteomes" id="UP000009182">
    <property type="component" value="Chromosome"/>
</dbReference>
<dbReference type="GO" id="GO:0005829">
    <property type="term" value="C:cytosol"/>
    <property type="evidence" value="ECO:0007669"/>
    <property type="project" value="TreeGrafter"/>
</dbReference>
<dbReference type="GO" id="GO:0005886">
    <property type="term" value="C:plasma membrane"/>
    <property type="evidence" value="ECO:0007669"/>
    <property type="project" value="UniProtKB-SubCell"/>
</dbReference>
<dbReference type="GO" id="GO:0052657">
    <property type="term" value="F:guanine phosphoribosyltransferase activity"/>
    <property type="evidence" value="ECO:0007669"/>
    <property type="project" value="RHEA"/>
</dbReference>
<dbReference type="GO" id="GO:0004422">
    <property type="term" value="F:hypoxanthine phosphoribosyltransferase activity"/>
    <property type="evidence" value="ECO:0007669"/>
    <property type="project" value="TreeGrafter"/>
</dbReference>
<dbReference type="GO" id="GO:0000287">
    <property type="term" value="F:magnesium ion binding"/>
    <property type="evidence" value="ECO:0007669"/>
    <property type="project" value="UniProtKB-UniRule"/>
</dbReference>
<dbReference type="GO" id="GO:0000310">
    <property type="term" value="F:xanthine phosphoribosyltransferase activity"/>
    <property type="evidence" value="ECO:0007669"/>
    <property type="project" value="UniProtKB-UniRule"/>
</dbReference>
<dbReference type="GO" id="GO:0032263">
    <property type="term" value="P:GMP salvage"/>
    <property type="evidence" value="ECO:0007669"/>
    <property type="project" value="UniProtKB-UniRule"/>
</dbReference>
<dbReference type="GO" id="GO:0032264">
    <property type="term" value="P:IMP salvage"/>
    <property type="evidence" value="ECO:0007669"/>
    <property type="project" value="TreeGrafter"/>
</dbReference>
<dbReference type="GO" id="GO:0006166">
    <property type="term" value="P:purine ribonucleoside salvage"/>
    <property type="evidence" value="ECO:0007669"/>
    <property type="project" value="UniProtKB-KW"/>
</dbReference>
<dbReference type="GO" id="GO:0032265">
    <property type="term" value="P:XMP salvage"/>
    <property type="evidence" value="ECO:0007669"/>
    <property type="project" value="UniProtKB-UniRule"/>
</dbReference>
<dbReference type="CDD" id="cd06223">
    <property type="entry name" value="PRTases_typeI"/>
    <property type="match status" value="1"/>
</dbReference>
<dbReference type="FunFam" id="3.40.50.2020:FF:000009">
    <property type="entry name" value="Xanthine phosphoribosyltransferase"/>
    <property type="match status" value="1"/>
</dbReference>
<dbReference type="Gene3D" id="3.40.50.2020">
    <property type="match status" value="1"/>
</dbReference>
<dbReference type="HAMAP" id="MF_01903">
    <property type="entry name" value="XGPRT"/>
    <property type="match status" value="1"/>
</dbReference>
<dbReference type="InterPro" id="IPR000836">
    <property type="entry name" value="PRibTrfase_dom"/>
</dbReference>
<dbReference type="InterPro" id="IPR029057">
    <property type="entry name" value="PRTase-like"/>
</dbReference>
<dbReference type="InterPro" id="IPR023747">
    <property type="entry name" value="Xanthine_Guanine_PRibTrfase"/>
</dbReference>
<dbReference type="NCBIfam" id="NF006613">
    <property type="entry name" value="PRK09177.1"/>
    <property type="match status" value="1"/>
</dbReference>
<dbReference type="PANTHER" id="PTHR39563">
    <property type="entry name" value="XANTHINE PHOSPHORIBOSYLTRANSFERASE"/>
    <property type="match status" value="1"/>
</dbReference>
<dbReference type="PANTHER" id="PTHR39563:SF1">
    <property type="entry name" value="XANTHINE-GUANINE PHOSPHORIBOSYLTRANSFERASE"/>
    <property type="match status" value="1"/>
</dbReference>
<dbReference type="Pfam" id="PF00156">
    <property type="entry name" value="Pribosyltran"/>
    <property type="match status" value="1"/>
</dbReference>
<dbReference type="SUPFAM" id="SSF53271">
    <property type="entry name" value="PRTase-like"/>
    <property type="match status" value="1"/>
</dbReference>
<dbReference type="PROSITE" id="PS00103">
    <property type="entry name" value="PUR_PYR_PR_TRANSFER"/>
    <property type="match status" value="1"/>
</dbReference>
<evidence type="ECO:0000255" key="1">
    <source>
        <dbReference type="HAMAP-Rule" id="MF_01903"/>
    </source>
</evidence>
<protein>
    <recommendedName>
        <fullName evidence="1">Xanthine-guanine phosphoribosyltransferase</fullName>
        <shortName evidence="1">XGPRT</shortName>
        <ecNumber evidence="1">2.4.2.-</ecNumber>
        <ecNumber evidence="1">2.4.2.22</ecNumber>
    </recommendedName>
    <alternativeName>
        <fullName evidence="1">Xanthine phosphoribosyltransferase</fullName>
    </alternativeName>
</protein>
<feature type="chain" id="PRO_0000261007" description="Xanthine-guanine phosphoribosyltransferase">
    <location>
        <begin position="1"/>
        <end position="152"/>
    </location>
</feature>
<feature type="binding site" evidence="1">
    <location>
        <begin position="37"/>
        <end position="38"/>
    </location>
    <ligand>
        <name>5-phospho-alpha-D-ribose 1-diphosphate</name>
        <dbReference type="ChEBI" id="CHEBI:58017"/>
    </ligand>
</feature>
<feature type="binding site" evidence="1">
    <location>
        <position position="69"/>
    </location>
    <ligand>
        <name>5-phospho-alpha-D-ribose 1-diphosphate</name>
        <dbReference type="ChEBI" id="CHEBI:58017"/>
    </ligand>
</feature>
<feature type="binding site" evidence="1">
    <location>
        <position position="69"/>
    </location>
    <ligand>
        <name>GMP</name>
        <dbReference type="ChEBI" id="CHEBI:58115"/>
    </ligand>
</feature>
<feature type="binding site" evidence="1">
    <location>
        <begin position="88"/>
        <end position="96"/>
    </location>
    <ligand>
        <name>5-phospho-alpha-D-ribose 1-diphosphate</name>
        <dbReference type="ChEBI" id="CHEBI:58017"/>
    </ligand>
</feature>
<feature type="binding site" evidence="1">
    <location>
        <position position="89"/>
    </location>
    <ligand>
        <name>Mg(2+)</name>
        <dbReference type="ChEBI" id="CHEBI:18420"/>
    </ligand>
</feature>
<feature type="binding site" evidence="1">
    <location>
        <begin position="92"/>
        <end position="96"/>
    </location>
    <ligand>
        <name>GMP</name>
        <dbReference type="ChEBI" id="CHEBI:58115"/>
    </ligand>
</feature>
<feature type="binding site" evidence="1">
    <location>
        <position position="92"/>
    </location>
    <ligand>
        <name>guanine</name>
        <dbReference type="ChEBI" id="CHEBI:16235"/>
    </ligand>
</feature>
<feature type="binding site" evidence="1">
    <location>
        <position position="92"/>
    </location>
    <ligand>
        <name>xanthine</name>
        <dbReference type="ChEBI" id="CHEBI:17712"/>
    </ligand>
</feature>
<feature type="binding site" evidence="1">
    <location>
        <begin position="134"/>
        <end position="135"/>
    </location>
    <ligand>
        <name>GMP</name>
        <dbReference type="ChEBI" id="CHEBI:58115"/>
    </ligand>
</feature>
<feature type="binding site" evidence="1">
    <location>
        <position position="135"/>
    </location>
    <ligand>
        <name>guanine</name>
        <dbReference type="ChEBI" id="CHEBI:16235"/>
    </ligand>
</feature>
<feature type="binding site" evidence="1">
    <location>
        <position position="135"/>
    </location>
    <ligand>
        <name>xanthine</name>
        <dbReference type="ChEBI" id="CHEBI:17712"/>
    </ligand>
</feature>
<reference key="1">
    <citation type="journal article" date="2006" name="Mol. Microbiol.">
        <title>Role of pathogenicity island-associated integrases in the genome plasticity of uropathogenic Escherichia coli strain 536.</title>
        <authorList>
            <person name="Hochhut B."/>
            <person name="Wilde C."/>
            <person name="Balling G."/>
            <person name="Middendorf B."/>
            <person name="Dobrindt U."/>
            <person name="Brzuszkiewicz E."/>
            <person name="Gottschalk G."/>
            <person name="Carniel E."/>
            <person name="Hacker J."/>
        </authorList>
    </citation>
    <scope>NUCLEOTIDE SEQUENCE [LARGE SCALE GENOMIC DNA]</scope>
    <source>
        <strain>536 / UPEC</strain>
    </source>
</reference>
<accession>Q0TL78</accession>
<comment type="function">
    <text evidence="1">Purine salvage pathway enzyme that catalyzes the transfer of the ribosyl-5-phosphate group from 5-phospho-alpha-D-ribose 1-diphosphate (PRPP) to the N9 position of the 6-oxopurines guanine and xanthine to form the corresponding ribonucleotides GMP (guanosine 5'-monophosphate) and XMP (xanthosine 5'-monophosphate), with the release of PPi. To a lesser extent, also acts on hypoxanthine.</text>
</comment>
<comment type="catalytic activity">
    <reaction evidence="1">
        <text>GMP + diphosphate = guanine + 5-phospho-alpha-D-ribose 1-diphosphate</text>
        <dbReference type="Rhea" id="RHEA:25424"/>
        <dbReference type="ChEBI" id="CHEBI:16235"/>
        <dbReference type="ChEBI" id="CHEBI:33019"/>
        <dbReference type="ChEBI" id="CHEBI:58017"/>
        <dbReference type="ChEBI" id="CHEBI:58115"/>
    </reaction>
    <physiologicalReaction direction="right-to-left" evidence="1">
        <dbReference type="Rhea" id="RHEA:25426"/>
    </physiologicalReaction>
</comment>
<comment type="catalytic activity">
    <reaction evidence="1">
        <text>XMP + diphosphate = xanthine + 5-phospho-alpha-D-ribose 1-diphosphate</text>
        <dbReference type="Rhea" id="RHEA:10800"/>
        <dbReference type="ChEBI" id="CHEBI:17712"/>
        <dbReference type="ChEBI" id="CHEBI:33019"/>
        <dbReference type="ChEBI" id="CHEBI:57464"/>
        <dbReference type="ChEBI" id="CHEBI:58017"/>
        <dbReference type="EC" id="2.4.2.22"/>
    </reaction>
    <physiologicalReaction direction="right-to-left" evidence="1">
        <dbReference type="Rhea" id="RHEA:10802"/>
    </physiologicalReaction>
</comment>
<comment type="catalytic activity">
    <reaction evidence="1">
        <text>IMP + diphosphate = hypoxanthine + 5-phospho-alpha-D-ribose 1-diphosphate</text>
        <dbReference type="Rhea" id="RHEA:17973"/>
        <dbReference type="ChEBI" id="CHEBI:17368"/>
        <dbReference type="ChEBI" id="CHEBI:33019"/>
        <dbReference type="ChEBI" id="CHEBI:58017"/>
        <dbReference type="ChEBI" id="CHEBI:58053"/>
    </reaction>
    <physiologicalReaction direction="right-to-left" evidence="1">
        <dbReference type="Rhea" id="RHEA:17975"/>
    </physiologicalReaction>
</comment>
<comment type="cofactor">
    <cofactor evidence="1">
        <name>Mg(2+)</name>
        <dbReference type="ChEBI" id="CHEBI:18420"/>
    </cofactor>
</comment>
<comment type="pathway">
    <text evidence="1">Purine metabolism; GMP biosynthesis via salvage pathway; GMP from guanine: step 1/1.</text>
</comment>
<comment type="pathway">
    <text evidence="1">Purine metabolism; XMP biosynthesis via salvage pathway; XMP from xanthine: step 1/1.</text>
</comment>
<comment type="subunit">
    <text evidence="1">Homotetramer.</text>
</comment>
<comment type="subcellular location">
    <subcellularLocation>
        <location evidence="1">Cell inner membrane</location>
        <topology evidence="1">Peripheral membrane protein</topology>
    </subcellularLocation>
</comment>
<comment type="similarity">
    <text evidence="1">Belongs to the purine/pyrimidine phosphoribosyltransferase family. XGPT subfamily.</text>
</comment>
<name>XGPT_ECOL5</name>
<gene>
    <name evidence="1" type="primary">gpt</name>
    <name type="ordered locus">ECP_0267</name>
</gene>
<sequence>MSEKYIVTWDMLQIHARKLASRLMPSEQWKGIIAVSRGGLVPGALLARELGIRHVDTVCISSYDHDNQRELKVLKRAEGDGEGFIVIDDLVDTGGTAVAIREMYPKAHFVTIFAKPAGRPLVDDYVVDIPQNTWIEQPWDMGVVFVPPISGR</sequence>
<organism>
    <name type="scientific">Escherichia coli O6:K15:H31 (strain 536 / UPEC)</name>
    <dbReference type="NCBI Taxonomy" id="362663"/>
    <lineage>
        <taxon>Bacteria</taxon>
        <taxon>Pseudomonadati</taxon>
        <taxon>Pseudomonadota</taxon>
        <taxon>Gammaproteobacteria</taxon>
        <taxon>Enterobacterales</taxon>
        <taxon>Enterobacteriaceae</taxon>
        <taxon>Escherichia</taxon>
    </lineage>
</organism>
<keyword id="KW-0997">Cell inner membrane</keyword>
<keyword id="KW-1003">Cell membrane</keyword>
<keyword id="KW-0328">Glycosyltransferase</keyword>
<keyword id="KW-0460">Magnesium</keyword>
<keyword id="KW-0472">Membrane</keyword>
<keyword id="KW-0479">Metal-binding</keyword>
<keyword id="KW-0660">Purine salvage</keyword>
<keyword id="KW-0808">Transferase</keyword>